<gene>
    <name type="primary">FCPF</name>
</gene>
<feature type="transit peptide" description="Chloroplast" evidence="2">
    <location>
        <begin position="1"/>
        <end position="31"/>
    </location>
</feature>
<feature type="chain" id="PRO_0000021244" description="Fucoxanthin-chlorophyll a-c binding protein F, chloroplastic">
    <location>
        <begin position="32"/>
        <end position="197"/>
    </location>
</feature>
<feature type="transmembrane region" description="Helical" evidence="1">
    <location>
        <begin position="73"/>
        <end position="94"/>
    </location>
</feature>
<feature type="transmembrane region" description="Helical" evidence="1">
    <location>
        <begin position="114"/>
        <end position="134"/>
    </location>
</feature>
<feature type="transmembrane region" description="Helical" evidence="1">
    <location>
        <begin position="174"/>
        <end position="196"/>
    </location>
</feature>
<proteinExistence type="inferred from homology"/>
<keyword id="KW-0148">Chlorophyll</keyword>
<keyword id="KW-0150">Chloroplast</keyword>
<keyword id="KW-0157">Chromophore</keyword>
<keyword id="KW-0437">Light-harvesting polypeptide</keyword>
<keyword id="KW-0472">Membrane</keyword>
<keyword id="KW-0602">Photosynthesis</keyword>
<keyword id="KW-0604">Photosystem II</keyword>
<keyword id="KW-0934">Plastid</keyword>
<keyword id="KW-0793">Thylakoid</keyword>
<keyword id="KW-0809">Transit peptide</keyword>
<keyword id="KW-0812">Transmembrane</keyword>
<keyword id="KW-1133">Transmembrane helix</keyword>
<organism>
    <name type="scientific">Phaeodactylum tricornutum</name>
    <name type="common">Diatom</name>
    <dbReference type="NCBI Taxonomy" id="2850"/>
    <lineage>
        <taxon>Eukaryota</taxon>
        <taxon>Sar</taxon>
        <taxon>Stramenopiles</taxon>
        <taxon>Ochrophyta</taxon>
        <taxon>Bacillariophyta</taxon>
        <taxon>Bacillariophyceae</taxon>
        <taxon>Bacillariophycidae</taxon>
        <taxon>Naviculales</taxon>
        <taxon>Phaeodactylaceae</taxon>
        <taxon>Phaeodactylum</taxon>
    </lineage>
</organism>
<comment type="function">
    <text>The light-harvesting complex (LHC) functions as a light receptor, it captures and delivers excitation energy to photosystems with which it is closely associated. In chromophytic algae, LHC is associated with photosystem II, energy being transferred from fucoxanthin and chlorophyll C to chlorophyll A and the photosynthetic reaction centers where it is used to synthesize ATP and reducing power.</text>
</comment>
<comment type="subunit">
    <text>The LHC complex of chromophytic algae is composed of fucoxanthin, chlorophyll A and C bound non-covalently by fucoxanthin chlorophyll proteins (FCPs). The ratio of the pigments in lhc; fucoxanthin: chlorophyll C: chlorophyll A is (0.6-1): (0.1-0.3): (1).</text>
</comment>
<comment type="subcellular location">
    <subcellularLocation>
        <location>Plastid</location>
        <location>Chloroplast thylakoid membrane</location>
        <topology>Multi-pass membrane protein</topology>
    </subcellularLocation>
    <text>FCPs are probably transported across the endoplasmic reticulum membranes that surround the plastid via a signal peptide, followed by translocation across the thylakoid membrane via a transit peptide.</text>
</comment>
<comment type="similarity">
    <text evidence="2">Belongs to the fucoxanthin chlorophyll protein family.</text>
</comment>
<reference key="1">
    <citation type="journal article" date="1993" name="Nucleic Acids Res.">
        <title>Characterization of gene clusters encoding the fucoxanthin chlorophyll proteins of the diatom Phaeodactylum tricornutum.</title>
        <authorList>
            <person name="Bhaya D."/>
            <person name="Grossman A.R."/>
        </authorList>
    </citation>
    <scope>NUCLEOTIDE SEQUENCE [GENOMIC DNA]</scope>
    <source>
        <strain>UTEX 646 / Bohlin</strain>
    </source>
</reference>
<name>FCPF_PHATR</name>
<evidence type="ECO:0000255" key="1"/>
<evidence type="ECO:0000305" key="2"/>
<protein>
    <recommendedName>
        <fullName>Fucoxanthin-chlorophyll a-c binding protein F, chloroplastic</fullName>
    </recommendedName>
</protein>
<accession>Q41094</accession>
<dbReference type="EMBL" id="Z23153">
    <property type="protein sequence ID" value="CAA80677.1"/>
    <property type="molecule type" value="Genomic_DNA"/>
</dbReference>
<dbReference type="PIR" id="S42130">
    <property type="entry name" value="S42130"/>
</dbReference>
<dbReference type="SMR" id="Q41094"/>
<dbReference type="HOGENOM" id="CLU_057943_4_1_1"/>
<dbReference type="GO" id="GO:0009535">
    <property type="term" value="C:chloroplast thylakoid membrane"/>
    <property type="evidence" value="ECO:0007669"/>
    <property type="project" value="UniProtKB-SubCell"/>
</dbReference>
<dbReference type="GO" id="GO:0030076">
    <property type="term" value="C:light-harvesting complex"/>
    <property type="evidence" value="ECO:0007669"/>
    <property type="project" value="UniProtKB-KW"/>
</dbReference>
<dbReference type="GO" id="GO:0009523">
    <property type="term" value="C:photosystem II"/>
    <property type="evidence" value="ECO:0007669"/>
    <property type="project" value="UniProtKB-KW"/>
</dbReference>
<dbReference type="GO" id="GO:0016168">
    <property type="term" value="F:chlorophyll binding"/>
    <property type="evidence" value="ECO:0007669"/>
    <property type="project" value="UniProtKB-KW"/>
</dbReference>
<dbReference type="GO" id="GO:0015979">
    <property type="term" value="P:photosynthesis"/>
    <property type="evidence" value="ECO:0007669"/>
    <property type="project" value="UniProtKB-KW"/>
</dbReference>
<dbReference type="FunFam" id="1.10.3460.10:FF:000011">
    <property type="entry name" value="Fucoxanthin chlorophyll a/c protein 8"/>
    <property type="match status" value="1"/>
</dbReference>
<dbReference type="Gene3D" id="1.10.3460.10">
    <property type="entry name" value="Chlorophyll a/b binding protein domain"/>
    <property type="match status" value="1"/>
</dbReference>
<dbReference type="InterPro" id="IPR022796">
    <property type="entry name" value="Chloroa_b-bind"/>
</dbReference>
<dbReference type="Pfam" id="PF00504">
    <property type="entry name" value="Chloroa_b-bind"/>
    <property type="match status" value="1"/>
</dbReference>
<dbReference type="SUPFAM" id="SSF103511">
    <property type="entry name" value="Chlorophyll a-b binding protein"/>
    <property type="match status" value="1"/>
</dbReference>
<sequence length="197" mass="21248">MKFAVFASLLASAAAFAPAQQSARTSVATNMAFESELGAQPPLGFFDPLGLVADGDQEKFDRLRYVELKHGRISMLAVVGYLVQENGIRLPGDIDYSGTSFASIPNGFAALSTISTAGIAQIVAFIGFLEIAVMKDITGGEFPGDFRNDYIDFGWDSFDEETQFKKRAIELNQGRAAQMGILALMVHEKLGVSLIPN</sequence>